<keyword id="KW-0002">3D-structure</keyword>
<keyword id="KW-0007">Acetylation</keyword>
<keyword id="KW-0025">Alternative splicing</keyword>
<keyword id="KW-0131">Cell cycle</keyword>
<keyword id="KW-0132">Cell division</keyword>
<keyword id="KW-0156">Chromatin regulator</keyword>
<keyword id="KW-0963">Cytoplasm</keyword>
<keyword id="KW-0227">DNA damage</keyword>
<keyword id="KW-0234">DNA repair</keyword>
<keyword id="KW-0498">Mitosis</keyword>
<keyword id="KW-0539">Nucleus</keyword>
<keyword id="KW-0597">Phosphoprotein</keyword>
<keyword id="KW-1267">Proteomics identification</keyword>
<keyword id="KW-1185">Reference proteome</keyword>
<keyword id="KW-0833">Ubl conjugation pathway</keyword>
<sequence length="329" mass="36560">MEVAEPSSPTEEEEEEEEHSAEPRPRTRSNPEGAEDRAVGAQASVGSRSEGEGEAASADDGSLNTSGAGPKSWQVPPPAPEVQIRTPRVNCPEKVIICLDLSEEMSLPKLESFNGSKTNALNVSQKMIEMFVRTKHKIDKSHEFALVVVNDDTAWLSGLTSDPRELCSCLYDLETASCSTFNLEGLFSLIQQKTELPVTENVQTIPPPYVVRTILVYSRPPCQPQFSLTEPMKKMFQCPYFFFDVVYIHNGTEEKEEEMSWKDMFAFMGSLDTKGTSYKYEVALAGPALELHNCMAKLLAHPLQRPCQSHASYSLLEEEDEAIEVEATV</sequence>
<evidence type="ECO:0000250" key="1">
    <source>
        <dbReference type="UniProtKB" id="Q5XIJ6"/>
    </source>
</evidence>
<evidence type="ECO:0000256" key="2">
    <source>
        <dbReference type="SAM" id="MobiDB-lite"/>
    </source>
</evidence>
<evidence type="ECO:0000269" key="3">
    <source>
    </source>
</evidence>
<evidence type="ECO:0000269" key="4">
    <source>
    </source>
</evidence>
<evidence type="ECO:0000269" key="5">
    <source>
    </source>
</evidence>
<evidence type="ECO:0000269" key="6">
    <source>
    </source>
</evidence>
<evidence type="ECO:0000269" key="7">
    <source>
    </source>
</evidence>
<evidence type="ECO:0000269" key="8">
    <source>
    </source>
</evidence>
<evidence type="ECO:0000269" key="9">
    <source>
    </source>
</evidence>
<evidence type="ECO:0000303" key="10">
    <source>
    </source>
</evidence>
<evidence type="ECO:0000303" key="11">
    <source>
    </source>
</evidence>
<evidence type="ECO:0000303" key="12">
    <source>
    </source>
</evidence>
<evidence type="ECO:0000305" key="13"/>
<evidence type="ECO:0007744" key="14">
    <source>
    </source>
</evidence>
<evidence type="ECO:0007744" key="15">
    <source>
    </source>
</evidence>
<evidence type="ECO:0007744" key="16">
    <source>
    </source>
</evidence>
<evidence type="ECO:0007744" key="17">
    <source>
    </source>
</evidence>
<evidence type="ECO:0007744" key="18">
    <source>
    </source>
</evidence>
<evidence type="ECO:0007744" key="19">
    <source>
    </source>
</evidence>
<evidence type="ECO:0007744" key="20">
    <source>
    </source>
</evidence>
<evidence type="ECO:0007744" key="21">
    <source>
    </source>
</evidence>
<comment type="function">
    <text evidence="4 5 6">Component of the BRCA1-A complex, a complex that specifically recognizes 'Lys-63'-linked ubiquitinated histones H2A and H2AX at DNA lesions sites, leading to target the BRCA1-BARD1 heterodimer to sites of DNA damage at double-strand breaks (DSBs). The BRCA1-A complex also possesses deubiquitinase activity that specifically removes 'Lys-63'-linked ubiquitin on histones H2A and H2AX. In the BRCA1-A complex, it is required for the complex integrity and its localization at DSBs. Component of the BRISC complex, a multiprotein complex that specifically cleaves 'Lys-63'-linked ubiquitin in various substrates (PubMed:24075985, PubMed:26195665). In these 2 complexes, it is probably required to maintain the stability of BABAM2 and help the 'Lys-63'-linked deubiquitinase activity mediated by BRCC3/BRCC36 component. The BRISC complex is required for normal mitotic spindle assembly and microtubule attachment to kinetochores via its role in deubiquitinating NUMA1 (PubMed:26195665). Plays a role in interferon signaling via its role in the deubiquitination of the interferon receptor IFNAR1; deubiquitination increases IFNAR1 activity by enhancing its stability and cell surface expression (PubMed:24075985). Down-regulates the response to bacterial lipopolysaccharide (LPS) via its role in IFNAR1 deubiquitination (PubMed:24075985).</text>
</comment>
<comment type="subunit">
    <text evidence="3 4 5 6 7 8 9">Component of the ARISC complex, at least composed of UIMC1/RAP80, ABRAXAS1, BRCC3/BRCC36, BABAM2 and BABAM1/NBA1 (PubMed:24075985). Component of the BRCA1-A complex, at least composed of BRCA1, BARD1, UIMC1/RAP80, ABRAXAS1, BRCC3/BRCC36, BABAM2 and BABAM1/NBA1 (PubMed:19261746, PubMed:19261748, PubMed:19261749, PubMed:21282113). In the BRCA1-A complex, interacts directly with ABRAXAS1 and BABAM2 (PubMed:19261748, PubMed:19261749). Component of the BRISC complex, at least composed of ABRAXAS2, BRCC3/BRCC36, BABAM2 and BABAM1/NBA1 (PubMed:19214193, PubMed:21282113, PubMed:24075985, PubMed:25283148). Identified in a complex with SHMT2 and the other subunits of the BRISC complex (PubMed:24075985).</text>
</comment>
<comment type="interaction">
    <interactant intactId="EBI-745725">
        <id>Q9NWV8</id>
    </interactant>
    <interactant intactId="EBI-745725">
        <id>Q9NWV8</id>
        <label>BABAM1</label>
    </interactant>
    <organismsDiffer>false</organismsDiffer>
    <experiments>3</experiments>
</comment>
<comment type="interaction">
    <interactant intactId="EBI-745725">
        <id>Q9NWV8</id>
    </interactant>
    <interactant intactId="EBI-949389">
        <id>Q9NXR7</id>
        <label>BABAM2</label>
    </interactant>
    <organismsDiffer>false</organismsDiffer>
    <experiments>16</experiments>
</comment>
<comment type="interaction">
    <interactant intactId="EBI-745725">
        <id>Q9NWV8</id>
    </interactant>
    <interactant intactId="EBI-2643704">
        <id>Q9Y2Q5</id>
        <label>LAMTOR2</label>
    </interactant>
    <organismsDiffer>false</organismsDiffer>
    <experiments>2</experiments>
</comment>
<comment type="interaction">
    <interactant intactId="EBI-745725">
        <id>Q9NWV8</id>
    </interactant>
    <interactant intactId="EBI-713832">
        <id>Q6P1K2</id>
        <label>PMF1</label>
    </interactant>
    <organismsDiffer>false</organismsDiffer>
    <experiments>3</experiments>
</comment>
<comment type="interaction">
    <interactant intactId="EBI-745725">
        <id>Q9NWV8</id>
    </interactant>
    <interactant intactId="EBI-750109">
        <id>Q9NYB0</id>
        <label>TERF2IP</label>
    </interactant>
    <organismsDiffer>false</organismsDiffer>
    <experiments>2</experiments>
</comment>
<comment type="interaction">
    <interactant intactId="EBI-745725">
        <id>Q9NWV8</id>
    </interactant>
    <interactant intactId="EBI-4398527">
        <id>Q9H2K2</id>
        <label>TNKS2</label>
    </interactant>
    <organismsDiffer>false</organismsDiffer>
    <experiments>7</experiments>
</comment>
<comment type="interaction">
    <interactant intactId="EBI-745725">
        <id>Q9NWV8</id>
    </interactant>
    <interactant intactId="EBI-719493">
        <id>P14373</id>
        <label>TRIM27</label>
    </interactant>
    <organismsDiffer>false</organismsDiffer>
    <experiments>7</experiments>
</comment>
<comment type="subcellular location">
    <subcellularLocation>
        <location evidence="6 8">Cytoplasm</location>
    </subcellularLocation>
    <subcellularLocation>
        <location evidence="4 5 6 7 8">Nucleus</location>
    </subcellularLocation>
    <text evidence="4 5 6 7">Localizes at sites of DNA damage at double-strand breaks (DSBs).</text>
</comment>
<comment type="alternative products">
    <event type="alternative splicing"/>
    <isoform>
        <id>Q9NWV8-1</id>
        <name>1</name>
        <sequence type="displayed"/>
    </isoform>
    <isoform>
        <id>Q9NWV8-2</id>
        <name>2</name>
        <sequence type="described" ref="VSP_037246 VSP_037249"/>
    </isoform>
    <isoform>
        <id>Q9NWV8-3</id>
        <name>3</name>
        <sequence type="described" ref="VSP_037247 VSP_037248"/>
    </isoform>
</comment>
<comment type="domain">
    <text evidence="6">The VWFA-like region is similar to the VWFA domain. Its presence reveals similarities between the structure of the 19S proteasome and the BRCA1-A complexes.</text>
</comment>
<comment type="similarity">
    <text evidence="13">Belongs to the BABAM1 family.</text>
</comment>
<comment type="sequence caution" evidence="13">
    <conflict type="frameshift">
        <sequence resource="EMBL-CDS" id="AAF29106"/>
    </conflict>
</comment>
<feature type="chain" id="PRO_0000288458" description="BRISC and BRCA1-A complex member 1">
    <location>
        <begin position="1"/>
        <end position="329"/>
    </location>
</feature>
<feature type="region of interest" description="Disordered" evidence="2">
    <location>
        <begin position="1"/>
        <end position="84"/>
    </location>
</feature>
<feature type="region of interest" description="VWFA-like">
    <location>
        <begin position="95"/>
        <end position="298"/>
    </location>
</feature>
<feature type="compositionally biased region" description="Acidic residues" evidence="2">
    <location>
        <begin position="10"/>
        <end position="19"/>
    </location>
</feature>
<feature type="modified residue" description="N-acetylmethionine" evidence="16 18 19">
    <location>
        <position position="1"/>
    </location>
</feature>
<feature type="modified residue" description="Phosphoserine" evidence="1">
    <location>
        <position position="8"/>
    </location>
</feature>
<feature type="modified residue" description="Phosphoserine" evidence="17">
    <location>
        <position position="29"/>
    </location>
</feature>
<feature type="modified residue" description="Phosphoserine" evidence="14 17 19 20">
    <location>
        <position position="49"/>
    </location>
</feature>
<feature type="modified residue" description="Phosphoserine" evidence="20">
    <location>
        <position position="57"/>
    </location>
</feature>
<feature type="modified residue" description="Phosphoserine" evidence="15 20 21">
    <location>
        <position position="62"/>
    </location>
</feature>
<feature type="modified residue" description="Phosphothreonine" evidence="17">
    <location>
        <position position="65"/>
    </location>
</feature>
<feature type="modified residue" description="Phosphoserine" evidence="14 17 21">
    <location>
        <position position="66"/>
    </location>
</feature>
<feature type="splice variant" id="VSP_037246" description="In isoform 2." evidence="10">
    <original>MEVAEPSSPTEEEEEEEEHSAEPRPRTRSNPEGAEDRAVGAQASVGSRSEGEGEAASADDGSLNTSGAGPKSWQVPPPAPEVQIRTPRVNCPEKVIICLDLSEEMSLPKLESFNG</original>
    <variation>MMGASTLQEPALSPGRCPRQPLRSKFGHHGSTVQRKC</variation>
    <location>
        <begin position="1"/>
        <end position="115"/>
    </location>
</feature>
<feature type="splice variant" id="VSP_037247" description="In isoform 3." evidence="10">
    <location>
        <begin position="116"/>
        <end position="190"/>
    </location>
</feature>
<feature type="splice variant" id="VSP_037248" description="In isoform 3." evidence="10">
    <original>KMFQCPYFFFDVVYIHNGTEEKEEEMSWKDMFAFMGSLDTKGTSYKYEVALAGPALELHNCMAKLLAHPLQRPCQSHASYSLLEEEDEAIEVEATV</original>
    <variation>VGEAWEREGCLQP</variation>
    <location>
        <begin position="234"/>
        <end position="329"/>
    </location>
</feature>
<feature type="splice variant" id="VSP_037249" description="In isoform 2." evidence="10">
    <location>
        <begin position="263"/>
        <end position="329"/>
    </location>
</feature>
<feature type="sequence conflict" description="In Ref. 4; CAG38557." evidence="13" ref="4">
    <original>P</original>
    <variation>S</variation>
    <location>
        <position position="76"/>
    </location>
</feature>
<feature type="sequence conflict" description="In Ref. 4; CAG38557." evidence="13" ref="4">
    <original>A</original>
    <variation>V</variation>
    <location>
        <position position="288"/>
    </location>
</feature>
<feature type="sequence conflict" description="In Ref. 4; CAG38557." evidence="13" ref="4">
    <original>P</original>
    <variation>S</variation>
    <location>
        <position position="302"/>
    </location>
</feature>
<accession>Q9NWV8</accession>
<accession>A8MQT0</accession>
<accession>B4DRY9</accession>
<accession>B4DVR1</accession>
<accession>Q6FIA0</accession>
<accession>Q9P018</accession>
<proteinExistence type="evidence at protein level"/>
<protein>
    <recommendedName>
        <fullName>BRISC and BRCA1-A complex member 1</fullName>
    </recommendedName>
    <alternativeName>
        <fullName evidence="11">Mediator of RAP80 interactions and targeting subunit of 40 kDa</fullName>
    </alternativeName>
    <alternativeName>
        <fullName evidence="12">New component of the BRCA1-A complex</fullName>
    </alternativeName>
</protein>
<organism>
    <name type="scientific">Homo sapiens</name>
    <name type="common">Human</name>
    <dbReference type="NCBI Taxonomy" id="9606"/>
    <lineage>
        <taxon>Eukaryota</taxon>
        <taxon>Metazoa</taxon>
        <taxon>Chordata</taxon>
        <taxon>Craniata</taxon>
        <taxon>Vertebrata</taxon>
        <taxon>Euteleostomi</taxon>
        <taxon>Mammalia</taxon>
        <taxon>Eutheria</taxon>
        <taxon>Euarchontoglires</taxon>
        <taxon>Primates</taxon>
        <taxon>Haplorrhini</taxon>
        <taxon>Catarrhini</taxon>
        <taxon>Hominidae</taxon>
        <taxon>Homo</taxon>
    </lineage>
</organism>
<reference key="1">
    <citation type="journal article" date="2000" name="Genome Res.">
        <title>Cloning and functional analysis of cDNAs with open reading frames for 300 previously undefined genes expressed in CD34+ hematopoietic stem/progenitor cells.</title>
        <authorList>
            <person name="Zhang Q.-H."/>
            <person name="Ye M."/>
            <person name="Wu X.-Y."/>
            <person name="Ren S.-X."/>
            <person name="Zhao M."/>
            <person name="Zhao C.-J."/>
            <person name="Fu G."/>
            <person name="Shen Y."/>
            <person name="Fan H.-Y."/>
            <person name="Lu G."/>
            <person name="Zhong M."/>
            <person name="Xu X.-R."/>
            <person name="Han Z.-G."/>
            <person name="Zhang J.-W."/>
            <person name="Tao J."/>
            <person name="Huang Q.-H."/>
            <person name="Zhou J."/>
            <person name="Hu G.-X."/>
            <person name="Gu J."/>
            <person name="Chen S.-J."/>
            <person name="Chen Z."/>
        </authorList>
    </citation>
    <scope>NUCLEOTIDE SEQUENCE [LARGE SCALE MRNA] (ISOFORM 1)</scope>
    <source>
        <tissue>Umbilical cord blood</tissue>
    </source>
</reference>
<reference key="2">
    <citation type="journal article" date="2001" name="Genome Res.">
        <title>Towards a catalog of human genes and proteins: sequencing and analysis of 500 novel complete protein coding human cDNAs.</title>
        <authorList>
            <person name="Wiemann S."/>
            <person name="Weil B."/>
            <person name="Wellenreuther R."/>
            <person name="Gassenhuber J."/>
            <person name="Glassl S."/>
            <person name="Ansorge W."/>
            <person name="Boecher M."/>
            <person name="Bloecker H."/>
            <person name="Bauersachs S."/>
            <person name="Blum H."/>
            <person name="Lauber J."/>
            <person name="Duesterhoeft A."/>
            <person name="Beyer A."/>
            <person name="Koehrer K."/>
            <person name="Strack N."/>
            <person name="Mewes H.-W."/>
            <person name="Ottenwaelder B."/>
            <person name="Obermaier B."/>
            <person name="Tampe J."/>
            <person name="Heubner D."/>
            <person name="Wambutt R."/>
            <person name="Korn B."/>
            <person name="Klein M."/>
            <person name="Poustka A."/>
        </authorList>
    </citation>
    <scope>NUCLEOTIDE SEQUENCE [LARGE SCALE MRNA] (ISOFORM 1)</scope>
    <source>
        <tissue>Brain</tissue>
    </source>
</reference>
<reference key="3">
    <citation type="journal article" date="2004" name="Nat. Genet.">
        <title>Complete sequencing and characterization of 21,243 full-length human cDNAs.</title>
        <authorList>
            <person name="Ota T."/>
            <person name="Suzuki Y."/>
            <person name="Nishikawa T."/>
            <person name="Otsuki T."/>
            <person name="Sugiyama T."/>
            <person name="Irie R."/>
            <person name="Wakamatsu A."/>
            <person name="Hayashi K."/>
            <person name="Sato H."/>
            <person name="Nagai K."/>
            <person name="Kimura K."/>
            <person name="Makita H."/>
            <person name="Sekine M."/>
            <person name="Obayashi M."/>
            <person name="Nishi T."/>
            <person name="Shibahara T."/>
            <person name="Tanaka T."/>
            <person name="Ishii S."/>
            <person name="Yamamoto J."/>
            <person name="Saito K."/>
            <person name="Kawai Y."/>
            <person name="Isono Y."/>
            <person name="Nakamura Y."/>
            <person name="Nagahari K."/>
            <person name="Murakami K."/>
            <person name="Yasuda T."/>
            <person name="Iwayanagi T."/>
            <person name="Wagatsuma M."/>
            <person name="Shiratori A."/>
            <person name="Sudo H."/>
            <person name="Hosoiri T."/>
            <person name="Kaku Y."/>
            <person name="Kodaira H."/>
            <person name="Kondo H."/>
            <person name="Sugawara M."/>
            <person name="Takahashi M."/>
            <person name="Kanda K."/>
            <person name="Yokoi T."/>
            <person name="Furuya T."/>
            <person name="Kikkawa E."/>
            <person name="Omura Y."/>
            <person name="Abe K."/>
            <person name="Kamihara K."/>
            <person name="Katsuta N."/>
            <person name="Sato K."/>
            <person name="Tanikawa M."/>
            <person name="Yamazaki M."/>
            <person name="Ninomiya K."/>
            <person name="Ishibashi T."/>
            <person name="Yamashita H."/>
            <person name="Murakawa K."/>
            <person name="Fujimori K."/>
            <person name="Tanai H."/>
            <person name="Kimata M."/>
            <person name="Watanabe M."/>
            <person name="Hiraoka S."/>
            <person name="Chiba Y."/>
            <person name="Ishida S."/>
            <person name="Ono Y."/>
            <person name="Takiguchi S."/>
            <person name="Watanabe S."/>
            <person name="Yosida M."/>
            <person name="Hotuta T."/>
            <person name="Kusano J."/>
            <person name="Kanehori K."/>
            <person name="Takahashi-Fujii A."/>
            <person name="Hara H."/>
            <person name="Tanase T.-O."/>
            <person name="Nomura Y."/>
            <person name="Togiya S."/>
            <person name="Komai F."/>
            <person name="Hara R."/>
            <person name="Takeuchi K."/>
            <person name="Arita M."/>
            <person name="Imose N."/>
            <person name="Musashino K."/>
            <person name="Yuuki H."/>
            <person name="Oshima A."/>
            <person name="Sasaki N."/>
            <person name="Aotsuka S."/>
            <person name="Yoshikawa Y."/>
            <person name="Matsunawa H."/>
            <person name="Ichihara T."/>
            <person name="Shiohata N."/>
            <person name="Sano S."/>
            <person name="Moriya S."/>
            <person name="Momiyama H."/>
            <person name="Satoh N."/>
            <person name="Takami S."/>
            <person name="Terashima Y."/>
            <person name="Suzuki O."/>
            <person name="Nakagawa S."/>
            <person name="Senoh A."/>
            <person name="Mizoguchi H."/>
            <person name="Goto Y."/>
            <person name="Shimizu F."/>
            <person name="Wakebe H."/>
            <person name="Hishigaki H."/>
            <person name="Watanabe T."/>
            <person name="Sugiyama A."/>
            <person name="Takemoto M."/>
            <person name="Kawakami B."/>
            <person name="Yamazaki M."/>
            <person name="Watanabe K."/>
            <person name="Kumagai A."/>
            <person name="Itakura S."/>
            <person name="Fukuzumi Y."/>
            <person name="Fujimori Y."/>
            <person name="Komiyama M."/>
            <person name="Tashiro H."/>
            <person name="Tanigami A."/>
            <person name="Fujiwara T."/>
            <person name="Ono T."/>
            <person name="Yamada K."/>
            <person name="Fujii Y."/>
            <person name="Ozaki K."/>
            <person name="Hirao M."/>
            <person name="Ohmori Y."/>
            <person name="Kawabata A."/>
            <person name="Hikiji T."/>
            <person name="Kobatake N."/>
            <person name="Inagaki H."/>
            <person name="Ikema Y."/>
            <person name="Okamoto S."/>
            <person name="Okitani R."/>
            <person name="Kawakami T."/>
            <person name="Noguchi S."/>
            <person name="Itoh T."/>
            <person name="Shigeta K."/>
            <person name="Senba T."/>
            <person name="Matsumura K."/>
            <person name="Nakajima Y."/>
            <person name="Mizuno T."/>
            <person name="Morinaga M."/>
            <person name="Sasaki M."/>
            <person name="Togashi T."/>
            <person name="Oyama M."/>
            <person name="Hata H."/>
            <person name="Watanabe M."/>
            <person name="Komatsu T."/>
            <person name="Mizushima-Sugano J."/>
            <person name="Satoh T."/>
            <person name="Shirai Y."/>
            <person name="Takahashi Y."/>
            <person name="Nakagawa K."/>
            <person name="Okumura K."/>
            <person name="Nagase T."/>
            <person name="Nomura N."/>
            <person name="Kikuchi H."/>
            <person name="Masuho Y."/>
            <person name="Yamashita R."/>
            <person name="Nakai K."/>
            <person name="Yada T."/>
            <person name="Nakamura Y."/>
            <person name="Ohara O."/>
            <person name="Isogai T."/>
            <person name="Sugano S."/>
        </authorList>
    </citation>
    <scope>NUCLEOTIDE SEQUENCE [LARGE SCALE MRNA] (ISOFORMS 1; 2 AND 3)</scope>
    <source>
        <tissue>Brain</tissue>
        <tissue>Spleen</tissue>
    </source>
</reference>
<reference key="4">
    <citation type="submission" date="2004-06" db="EMBL/GenBank/DDBJ databases">
        <title>Cloning of human full open reading frames in Gateway(TM) system entry vector (pDONR201).</title>
        <authorList>
            <person name="Ebert L."/>
            <person name="Schick M."/>
            <person name="Neubert P."/>
            <person name="Schatten R."/>
            <person name="Henze S."/>
            <person name="Korn B."/>
        </authorList>
    </citation>
    <scope>NUCLEOTIDE SEQUENCE [LARGE SCALE MRNA] (ISOFORM 1)</scope>
</reference>
<reference key="5">
    <citation type="journal article" date="2004" name="Nature">
        <title>The DNA sequence and biology of human chromosome 19.</title>
        <authorList>
            <person name="Grimwood J."/>
            <person name="Gordon L.A."/>
            <person name="Olsen A.S."/>
            <person name="Terry A."/>
            <person name="Schmutz J."/>
            <person name="Lamerdin J.E."/>
            <person name="Hellsten U."/>
            <person name="Goodstein D."/>
            <person name="Couronne O."/>
            <person name="Tran-Gyamfi M."/>
            <person name="Aerts A."/>
            <person name="Altherr M."/>
            <person name="Ashworth L."/>
            <person name="Bajorek E."/>
            <person name="Black S."/>
            <person name="Branscomb E."/>
            <person name="Caenepeel S."/>
            <person name="Carrano A.V."/>
            <person name="Caoile C."/>
            <person name="Chan Y.M."/>
            <person name="Christensen M."/>
            <person name="Cleland C.A."/>
            <person name="Copeland A."/>
            <person name="Dalin E."/>
            <person name="Dehal P."/>
            <person name="Denys M."/>
            <person name="Detter J.C."/>
            <person name="Escobar J."/>
            <person name="Flowers D."/>
            <person name="Fotopulos D."/>
            <person name="Garcia C."/>
            <person name="Georgescu A.M."/>
            <person name="Glavina T."/>
            <person name="Gomez M."/>
            <person name="Gonzales E."/>
            <person name="Groza M."/>
            <person name="Hammon N."/>
            <person name="Hawkins T."/>
            <person name="Haydu L."/>
            <person name="Ho I."/>
            <person name="Huang W."/>
            <person name="Israni S."/>
            <person name="Jett J."/>
            <person name="Kadner K."/>
            <person name="Kimball H."/>
            <person name="Kobayashi A."/>
            <person name="Larionov V."/>
            <person name="Leem S.-H."/>
            <person name="Lopez F."/>
            <person name="Lou Y."/>
            <person name="Lowry S."/>
            <person name="Malfatti S."/>
            <person name="Martinez D."/>
            <person name="McCready P.M."/>
            <person name="Medina C."/>
            <person name="Morgan J."/>
            <person name="Nelson K."/>
            <person name="Nolan M."/>
            <person name="Ovcharenko I."/>
            <person name="Pitluck S."/>
            <person name="Pollard M."/>
            <person name="Popkie A.P."/>
            <person name="Predki P."/>
            <person name="Quan G."/>
            <person name="Ramirez L."/>
            <person name="Rash S."/>
            <person name="Retterer J."/>
            <person name="Rodriguez A."/>
            <person name="Rogers S."/>
            <person name="Salamov A."/>
            <person name="Salazar A."/>
            <person name="She X."/>
            <person name="Smith D."/>
            <person name="Slezak T."/>
            <person name="Solovyev V."/>
            <person name="Thayer N."/>
            <person name="Tice H."/>
            <person name="Tsai M."/>
            <person name="Ustaszewska A."/>
            <person name="Vo N."/>
            <person name="Wagner M."/>
            <person name="Wheeler J."/>
            <person name="Wu K."/>
            <person name="Xie G."/>
            <person name="Yang J."/>
            <person name="Dubchak I."/>
            <person name="Furey T.S."/>
            <person name="DeJong P."/>
            <person name="Dickson M."/>
            <person name="Gordon D."/>
            <person name="Eichler E.E."/>
            <person name="Pennacchio L.A."/>
            <person name="Richardson P."/>
            <person name="Stubbs L."/>
            <person name="Rokhsar D.S."/>
            <person name="Myers R.M."/>
            <person name="Rubin E.M."/>
            <person name="Lucas S.M."/>
        </authorList>
    </citation>
    <scope>NUCLEOTIDE SEQUENCE [LARGE SCALE GENOMIC DNA]</scope>
</reference>
<reference key="6">
    <citation type="journal article" date="2004" name="Genome Res.">
        <title>The status, quality, and expansion of the NIH full-length cDNA project: the Mammalian Gene Collection (MGC).</title>
        <authorList>
            <consortium name="The MGC Project Team"/>
        </authorList>
    </citation>
    <scope>NUCLEOTIDE SEQUENCE [LARGE SCALE MRNA] (ISOFORM 1)</scope>
    <source>
        <tissue>Ovary</tissue>
        <tissue>Pituitary</tissue>
        <tissue>Placenta</tissue>
    </source>
</reference>
<reference key="7">
    <citation type="journal article" date="2006" name="Cell">
        <title>Global, in vivo, and site-specific phosphorylation dynamics in signaling networks.</title>
        <authorList>
            <person name="Olsen J.V."/>
            <person name="Blagoev B."/>
            <person name="Gnad F."/>
            <person name="Macek B."/>
            <person name="Kumar C."/>
            <person name="Mortensen P."/>
            <person name="Mann M."/>
        </authorList>
    </citation>
    <scope>IDENTIFICATION BY MASS SPECTROMETRY [LARGE SCALE ANALYSIS]</scope>
    <source>
        <tissue>Cervix carcinoma</tissue>
    </source>
</reference>
<reference key="8">
    <citation type="journal article" date="2008" name="Mol. Cell">
        <title>Kinase-selective enrichment enables quantitative phosphoproteomics of the kinome across the cell cycle.</title>
        <authorList>
            <person name="Daub H."/>
            <person name="Olsen J.V."/>
            <person name="Bairlein M."/>
            <person name="Gnad F."/>
            <person name="Oppermann F.S."/>
            <person name="Korner R."/>
            <person name="Greff Z."/>
            <person name="Keri G."/>
            <person name="Stemmann O."/>
            <person name="Mann M."/>
        </authorList>
    </citation>
    <scope>PHOSPHORYLATION [LARGE SCALE ANALYSIS] AT SER-62</scope>
    <scope>IDENTIFICATION BY MASS SPECTROMETRY [LARGE SCALE ANALYSIS]</scope>
    <source>
        <tissue>Cervix carcinoma</tissue>
    </source>
</reference>
<reference key="9">
    <citation type="journal article" date="2008" name="Proc. Natl. Acad. Sci. U.S.A.">
        <title>A quantitative atlas of mitotic phosphorylation.</title>
        <authorList>
            <person name="Dephoure N."/>
            <person name="Zhou C."/>
            <person name="Villen J."/>
            <person name="Beausoleil S.A."/>
            <person name="Bakalarski C.E."/>
            <person name="Elledge S.J."/>
            <person name="Gygi S.P."/>
        </authorList>
    </citation>
    <scope>PHOSPHORYLATION [LARGE SCALE ANALYSIS] AT SER-49 AND SER-66</scope>
    <scope>IDENTIFICATION BY MASS SPECTROMETRY [LARGE SCALE ANALYSIS]</scope>
    <source>
        <tissue>Cervix carcinoma</tissue>
    </source>
</reference>
<reference key="10">
    <citation type="journal article" date="2009" name="Anal. Chem.">
        <title>Lys-N and trypsin cover complementary parts of the phosphoproteome in a refined SCX-based approach.</title>
        <authorList>
            <person name="Gauci S."/>
            <person name="Helbig A.O."/>
            <person name="Slijper M."/>
            <person name="Krijgsveld J."/>
            <person name="Heck A.J."/>
            <person name="Mohammed S."/>
        </authorList>
    </citation>
    <scope>ACETYLATION [LARGE SCALE ANALYSIS] AT MET-1</scope>
    <scope>IDENTIFICATION BY MASS SPECTROMETRY [LARGE SCALE ANALYSIS]</scope>
</reference>
<reference key="11">
    <citation type="journal article" date="2009" name="EMBO J.">
        <title>K63-specific deubiquitination by two JAMM/MPN+ complexes: BRISC-associated Brcc36 and proteasomal Poh1.</title>
        <authorList>
            <person name="Cooper E.M."/>
            <person name="Cutcliffe C."/>
            <person name="Kristiansen T.Z."/>
            <person name="Pandey A."/>
            <person name="Pickart C.M."/>
            <person name="Cohen R.E."/>
        </authorList>
    </citation>
    <scope>IDENTIFICATION IN THE BRISC COMPLEX</scope>
</reference>
<reference key="12">
    <citation type="journal article" date="2009" name="Genes Dev.">
        <title>MERIT40 controls BRCA1-Rap80 complex integrity and recruitment to DNA double-strand breaks.</title>
        <authorList>
            <person name="Shao G."/>
            <person name="Patterson-Fortin J."/>
            <person name="Messick T.E."/>
            <person name="Feng D."/>
            <person name="Shanbhag N."/>
            <person name="Wang Y."/>
            <person name="Greenberg R.A."/>
        </authorList>
    </citation>
    <scope>FUNCTION</scope>
    <scope>IDENTIFICATION BY MASS SPECTROMETRY</scope>
    <scope>IDENTIFICATION IN THE BRCA1-A COMPLEX</scope>
    <scope>SUBCELLULAR LOCATION</scope>
</reference>
<reference key="13">
    <citation type="journal article" date="2009" name="Genes Dev.">
        <title>NBA1, a new player in the Brca1 A complex, is required for DNA damage resistance and checkpoint control.</title>
        <authorList>
            <person name="Wang B."/>
            <person name="Hurov K."/>
            <person name="Hofmann K."/>
            <person name="Elledge S.J."/>
        </authorList>
    </citation>
    <scope>FUNCTION</scope>
    <scope>IDENTIFICATION IN THE BRCA1-A COMPLEX</scope>
    <scope>SUBCELLULAR LOCATION</scope>
    <scope>DOMAIN VWFA-LIKE</scope>
    <scope>INTERACTION WITH ABRAXAS1</scope>
</reference>
<reference key="14">
    <citation type="journal article" date="2009" name="Genes Dev.">
        <title>MERIT40 facilitates BRCA1 localization and DNA damage repair.</title>
        <authorList>
            <person name="Feng L."/>
            <person name="Huang J."/>
            <person name="Chen J."/>
        </authorList>
    </citation>
    <scope>FUNCTION</scope>
    <scope>IDENTIFICATION BY MASS SPECTROMETRY</scope>
    <scope>IDENTIFICATION IN THE BRCA1-A COMPLEX</scope>
    <scope>SUBCELLULAR LOCATION</scope>
    <scope>INTERACTION WITH BABAM2</scope>
</reference>
<reference key="15">
    <citation type="journal article" date="2009" name="Sci. Signal.">
        <title>Quantitative phosphoproteomic analysis of T cell receptor signaling reveals system-wide modulation of protein-protein interactions.</title>
        <authorList>
            <person name="Mayya V."/>
            <person name="Lundgren D.H."/>
            <person name="Hwang S.-I."/>
            <person name="Rezaul K."/>
            <person name="Wu L."/>
            <person name="Eng J.K."/>
            <person name="Rodionov V."/>
            <person name="Han D.K."/>
        </authorList>
    </citation>
    <scope>PHOSPHORYLATION [LARGE SCALE ANALYSIS] AT SER-29; SER-49; THR-65 AND SER-66</scope>
    <scope>IDENTIFICATION BY MASS SPECTROMETRY [LARGE SCALE ANALYSIS]</scope>
    <source>
        <tissue>Leukemic T-cell</tissue>
    </source>
</reference>
<reference key="16">
    <citation type="journal article" date="2010" name="Sci. Signal.">
        <title>Quantitative phosphoproteomics reveals widespread full phosphorylation site occupancy during mitosis.</title>
        <authorList>
            <person name="Olsen J.V."/>
            <person name="Vermeulen M."/>
            <person name="Santamaria A."/>
            <person name="Kumar C."/>
            <person name="Miller M.L."/>
            <person name="Jensen L.J."/>
            <person name="Gnad F."/>
            <person name="Cox J."/>
            <person name="Jensen T.S."/>
            <person name="Nigg E.A."/>
            <person name="Brunak S."/>
            <person name="Mann M."/>
        </authorList>
    </citation>
    <scope>ACETYLATION [LARGE SCALE ANALYSIS] AT MET-1</scope>
    <scope>IDENTIFICATION BY MASS SPECTROMETRY [LARGE SCALE ANALYSIS]</scope>
    <source>
        <tissue>Cervix carcinoma</tissue>
    </source>
</reference>
<reference key="17">
    <citation type="journal article" date="2011" name="BMC Syst. Biol.">
        <title>Initial characterization of the human central proteome.</title>
        <authorList>
            <person name="Burkard T.R."/>
            <person name="Planyavsky M."/>
            <person name="Kaupe I."/>
            <person name="Breitwieser F.P."/>
            <person name="Buerckstuemmer T."/>
            <person name="Bennett K.L."/>
            <person name="Superti-Furga G."/>
            <person name="Colinge J."/>
        </authorList>
    </citation>
    <scope>IDENTIFICATION BY MASS SPECTROMETRY [LARGE SCALE ANALYSIS]</scope>
</reference>
<reference key="18">
    <citation type="journal article" date="2011" name="J. Biol. Chem.">
        <title>NBA1/MERIT40 and BRE interaction is required for the integrity of two distinct deubiquitinating enzyme BRCC36-containing complexes.</title>
        <authorList>
            <person name="Hu X."/>
            <person name="Kim J.A."/>
            <person name="Castillo A."/>
            <person name="Huang M."/>
            <person name="Liu J."/>
            <person name="Wang B."/>
        </authorList>
    </citation>
    <scope>IDENTIFICATION IN BRISC COMPLEX</scope>
    <scope>IDENTIFICATION IN THE BRCA1-A COMPLEX</scope>
    <scope>INTERACTION WITH BABAM2</scope>
    <scope>SUBCELLULAR LOCATION</scope>
</reference>
<reference key="19">
    <citation type="journal article" date="2011" name="Sci. Signal.">
        <title>System-wide temporal characterization of the proteome and phosphoproteome of human embryonic stem cell differentiation.</title>
        <authorList>
            <person name="Rigbolt K.T."/>
            <person name="Prokhorova T.A."/>
            <person name="Akimov V."/>
            <person name="Henningsen J."/>
            <person name="Johansen P.T."/>
            <person name="Kratchmarova I."/>
            <person name="Kassem M."/>
            <person name="Mann M."/>
            <person name="Olsen J.V."/>
            <person name="Blagoev B."/>
        </authorList>
    </citation>
    <scope>ACETYLATION [LARGE SCALE ANALYSIS] AT MET-1</scope>
    <scope>PHOSPHORYLATION [LARGE SCALE ANALYSIS] AT SER-49</scope>
    <scope>IDENTIFICATION BY MASS SPECTROMETRY [LARGE SCALE ANALYSIS]</scope>
</reference>
<reference key="20">
    <citation type="journal article" date="2013" name="Cell Rep.">
        <title>A BRISC-SHMT complex deubiquitinates IFNAR1 and regulates interferon responses.</title>
        <authorList>
            <person name="Zheng H."/>
            <person name="Gupta V."/>
            <person name="Patterson-Fortin J."/>
            <person name="Bhattacharya S."/>
            <person name="Katlinski K."/>
            <person name="Wu J."/>
            <person name="Varghese B."/>
            <person name="Carbone C.J."/>
            <person name="Aressy B."/>
            <person name="Fuchs S.Y."/>
            <person name="Greenberg R.A."/>
        </authorList>
    </citation>
    <scope>FUNCTION</scope>
    <scope>IDENTIFICATION IN THE BRISC COMPLEX</scope>
    <scope>IDENTIFICATION IN THE ARISC COMPLEX</scope>
    <scope>IDENTIFICATION BY MASS SPECTROMETRY</scope>
    <scope>SUBCELLULAR LOCATION</scope>
</reference>
<reference key="21">
    <citation type="journal article" date="2013" name="J. Proteome Res.">
        <title>Toward a comprehensive characterization of a human cancer cell phosphoproteome.</title>
        <authorList>
            <person name="Zhou H."/>
            <person name="Di Palma S."/>
            <person name="Preisinger C."/>
            <person name="Peng M."/>
            <person name="Polat A.N."/>
            <person name="Heck A.J."/>
            <person name="Mohammed S."/>
        </authorList>
    </citation>
    <scope>PHOSPHORYLATION [LARGE SCALE ANALYSIS] AT SER-49; SER-57 AND SER-62</scope>
    <scope>IDENTIFICATION BY MASS SPECTROMETRY [LARGE SCALE ANALYSIS]</scope>
    <source>
        <tissue>Cervix carcinoma</tissue>
        <tissue>Erythroleukemia</tissue>
    </source>
</reference>
<reference key="22">
    <citation type="journal article" date="2014" name="J. Proteomics">
        <title>An enzyme assisted RP-RPLC approach for in-depth analysis of human liver phosphoproteome.</title>
        <authorList>
            <person name="Bian Y."/>
            <person name="Song C."/>
            <person name="Cheng K."/>
            <person name="Dong M."/>
            <person name="Wang F."/>
            <person name="Huang J."/>
            <person name="Sun D."/>
            <person name="Wang L."/>
            <person name="Ye M."/>
            <person name="Zou H."/>
        </authorList>
    </citation>
    <scope>PHOSPHORYLATION [LARGE SCALE ANALYSIS] AT SER-62 AND SER-66</scope>
    <scope>IDENTIFICATION BY MASS SPECTROMETRY [LARGE SCALE ANALYSIS]</scope>
    <source>
        <tissue>Liver</tissue>
    </source>
</reference>
<reference key="23">
    <citation type="journal article" date="2014" name="Nat. Commun.">
        <title>ABRO1 suppresses tumourigenesis and regulates the DNA damage response by stabilizing p53.</title>
        <authorList>
            <person name="Zhang J."/>
            <person name="Cao M."/>
            <person name="Dong J."/>
            <person name="Li C."/>
            <person name="Xu W."/>
            <person name="Zhan Y."/>
            <person name="Wang X."/>
            <person name="Yu M."/>
            <person name="Ge C."/>
            <person name="Ge Z."/>
            <person name="Yang X."/>
        </authorList>
    </citation>
    <scope>IDENTIFICATION IN THE BRISC COMPLEX</scope>
</reference>
<reference key="24">
    <citation type="journal article" date="2015" name="J. Cell Biol.">
        <title>The deubiquitinating enzyme complex BRISC is required for proper mitotic spindle assembly in mammalian cells.</title>
        <authorList>
            <person name="Yan K."/>
            <person name="Li L."/>
            <person name="Wang X."/>
            <person name="Hong R."/>
            <person name="Zhang Y."/>
            <person name="Yang H."/>
            <person name="Lin M."/>
            <person name="Zhang S."/>
            <person name="He Q."/>
            <person name="Zheng D."/>
            <person name="Tang J."/>
            <person name="Yin Y."/>
            <person name="Shao G."/>
        </authorList>
    </citation>
    <scope>FUNCTION</scope>
</reference>
<gene>
    <name type="primary">BABAM1</name>
    <name type="synonym">C19orf62</name>
    <name evidence="11" type="synonym">MERIT40</name>
    <name evidence="12" type="synonym">NBA1</name>
    <name type="ORF">HSPC142</name>
</gene>
<name>BABA1_HUMAN</name>
<dbReference type="EMBL" id="AF161491">
    <property type="protein sequence ID" value="AAF29106.1"/>
    <property type="status" value="ALT_FRAME"/>
    <property type="molecule type" value="mRNA"/>
</dbReference>
<dbReference type="EMBL" id="AL136692">
    <property type="protein sequence ID" value="CAB66627.1"/>
    <property type="molecule type" value="mRNA"/>
</dbReference>
<dbReference type="EMBL" id="AK000578">
    <property type="protein sequence ID" value="BAA91268.1"/>
    <property type="molecule type" value="mRNA"/>
</dbReference>
<dbReference type="EMBL" id="AK299493">
    <property type="protein sequence ID" value="BAG61451.1"/>
    <property type="molecule type" value="mRNA"/>
</dbReference>
<dbReference type="EMBL" id="AK301193">
    <property type="protein sequence ID" value="BAG62773.1"/>
    <property type="molecule type" value="mRNA"/>
</dbReference>
<dbReference type="EMBL" id="CR533526">
    <property type="protein sequence ID" value="CAG38557.1"/>
    <property type="molecule type" value="mRNA"/>
</dbReference>
<dbReference type="EMBL" id="AC104522">
    <property type="status" value="NOT_ANNOTATED_CDS"/>
    <property type="molecule type" value="Genomic_DNA"/>
</dbReference>
<dbReference type="EMBL" id="BC000788">
    <property type="protein sequence ID" value="AAH00788.1"/>
    <property type="molecule type" value="mRNA"/>
</dbReference>
<dbReference type="EMBL" id="BC006244">
    <property type="protein sequence ID" value="AAH06244.1"/>
    <property type="molecule type" value="mRNA"/>
</dbReference>
<dbReference type="EMBL" id="BC091491">
    <property type="protein sequence ID" value="AAH91491.1"/>
    <property type="molecule type" value="mRNA"/>
</dbReference>
<dbReference type="CCDS" id="CCDS46012.1">
    <molecule id="Q9NWV8-1"/>
</dbReference>
<dbReference type="RefSeq" id="NP_001028721.1">
    <molecule id="Q9NWV8-1"/>
    <property type="nucleotide sequence ID" value="NM_001033549.3"/>
</dbReference>
<dbReference type="RefSeq" id="NP_001275685.1">
    <molecule id="Q9NWV8-1"/>
    <property type="nucleotide sequence ID" value="NM_001288756.2"/>
</dbReference>
<dbReference type="RefSeq" id="NP_001275686.1">
    <property type="nucleotide sequence ID" value="NM_001288757.1"/>
</dbReference>
<dbReference type="RefSeq" id="NP_054892.2">
    <molecule id="Q9NWV8-1"/>
    <property type="nucleotide sequence ID" value="NM_014173.4"/>
</dbReference>
<dbReference type="PDB" id="6H3C">
    <property type="method" value="EM"/>
    <property type="resolution" value="3.90 A"/>
    <property type="chains" value="D/I=1-329"/>
</dbReference>
<dbReference type="PDB" id="8PVY">
    <property type="method" value="EM"/>
    <property type="resolution" value="3.02 A"/>
    <property type="chains" value="M/N/O/P=72-329"/>
</dbReference>
<dbReference type="PDB" id="8PY2">
    <property type="method" value="EM"/>
    <property type="resolution" value="3.32 A"/>
    <property type="chains" value="M/N/O/P=72-329"/>
</dbReference>
<dbReference type="PDBsum" id="6H3C"/>
<dbReference type="PDBsum" id="8PVY"/>
<dbReference type="PDBsum" id="8PY2"/>
<dbReference type="EMDB" id="EMD-0132"/>
<dbReference type="EMDB" id="EMD-17980"/>
<dbReference type="EMDB" id="EMD-18009"/>
<dbReference type="EMDB" id="EMD-4760"/>
<dbReference type="SMR" id="Q9NWV8"/>
<dbReference type="BioGRID" id="118855">
    <property type="interactions" value="102"/>
</dbReference>
<dbReference type="ComplexPortal" id="CPX-4425">
    <property type="entry name" value="BRCA1-A complex"/>
</dbReference>
<dbReference type="ComplexPortal" id="CPX-9341">
    <property type="entry name" value="BRISC-SHMT2 complex"/>
</dbReference>
<dbReference type="ComplexPortal" id="CPX-9421">
    <property type="entry name" value="BRISC complex"/>
</dbReference>
<dbReference type="CORUM" id="Q9NWV8"/>
<dbReference type="ELM" id="Q9NWV8"/>
<dbReference type="FunCoup" id="Q9NWV8">
    <property type="interactions" value="4095"/>
</dbReference>
<dbReference type="IntAct" id="Q9NWV8">
    <property type="interactions" value="76"/>
</dbReference>
<dbReference type="MINT" id="Q9NWV8"/>
<dbReference type="STRING" id="9606.ENSP00000352408"/>
<dbReference type="BindingDB" id="Q9NWV8"/>
<dbReference type="GlyGen" id="Q9NWV8">
    <property type="glycosylation" value="3 sites, 2 N-linked glycans (2 sites), 1 O-linked glycan (1 site)"/>
</dbReference>
<dbReference type="iPTMnet" id="Q9NWV8"/>
<dbReference type="PhosphoSitePlus" id="Q9NWV8"/>
<dbReference type="BioMuta" id="BABAM1"/>
<dbReference type="DMDM" id="74734678"/>
<dbReference type="jPOST" id="Q9NWV8"/>
<dbReference type="MassIVE" id="Q9NWV8"/>
<dbReference type="PaxDb" id="9606-ENSP00000352408"/>
<dbReference type="PeptideAtlas" id="Q9NWV8"/>
<dbReference type="ProteomicsDB" id="82986">
    <molecule id="Q9NWV8-1"/>
</dbReference>
<dbReference type="ProteomicsDB" id="82987">
    <molecule id="Q9NWV8-2"/>
</dbReference>
<dbReference type="ProteomicsDB" id="82988">
    <molecule id="Q9NWV8-3"/>
</dbReference>
<dbReference type="Pumba" id="Q9NWV8"/>
<dbReference type="Antibodypedia" id="27571">
    <property type="antibodies" value="236 antibodies from 25 providers"/>
</dbReference>
<dbReference type="DNASU" id="29086"/>
<dbReference type="Ensembl" id="ENST00000359435.8">
    <molecule id="Q9NWV8-1"/>
    <property type="protein sequence ID" value="ENSP00000352408.3"/>
    <property type="gene ID" value="ENSG00000105393.16"/>
</dbReference>
<dbReference type="Ensembl" id="ENST00000598188.6">
    <molecule id="Q9NWV8-1"/>
    <property type="protein sequence ID" value="ENSP00000471605.1"/>
    <property type="gene ID" value="ENSG00000105393.16"/>
</dbReference>
<dbReference type="Ensembl" id="ENST00000601043.5">
    <molecule id="Q9NWV8-1"/>
    <property type="protein sequence ID" value="ENSP00000470920.1"/>
    <property type="gene ID" value="ENSG00000105393.16"/>
</dbReference>
<dbReference type="GeneID" id="29086"/>
<dbReference type="KEGG" id="hsa:29086"/>
<dbReference type="MANE-Select" id="ENST00000598188.6">
    <property type="protein sequence ID" value="ENSP00000471605.1"/>
    <property type="RefSeq nucleotide sequence ID" value="NM_014173.4"/>
    <property type="RefSeq protein sequence ID" value="NP_054892.2"/>
</dbReference>
<dbReference type="UCSC" id="uc002nfu.5">
    <molecule id="Q9NWV8-1"/>
    <property type="organism name" value="human"/>
</dbReference>
<dbReference type="AGR" id="HGNC:25008"/>
<dbReference type="CTD" id="29086"/>
<dbReference type="DisGeNET" id="29086"/>
<dbReference type="GeneCards" id="BABAM1"/>
<dbReference type="HGNC" id="HGNC:25008">
    <property type="gene designation" value="BABAM1"/>
</dbReference>
<dbReference type="HPA" id="ENSG00000105393">
    <property type="expression patterns" value="Low tissue specificity"/>
</dbReference>
<dbReference type="MIM" id="612766">
    <property type="type" value="gene"/>
</dbReference>
<dbReference type="neXtProt" id="NX_Q9NWV8"/>
<dbReference type="OpenTargets" id="ENSG00000105393"/>
<dbReference type="PharmGKB" id="PA162378767"/>
<dbReference type="VEuPathDB" id="HostDB:ENSG00000105393"/>
<dbReference type="eggNOG" id="ENOG502QPZP">
    <property type="taxonomic scope" value="Eukaryota"/>
</dbReference>
<dbReference type="GeneTree" id="ENSGT00390000016934"/>
<dbReference type="InParanoid" id="Q9NWV8"/>
<dbReference type="OMA" id="SCTTAWP"/>
<dbReference type="OrthoDB" id="547311at2759"/>
<dbReference type="PAN-GO" id="Q9NWV8">
    <property type="GO annotations" value="6 GO annotations based on evolutionary models"/>
</dbReference>
<dbReference type="PhylomeDB" id="Q9NWV8"/>
<dbReference type="TreeFam" id="TF329070"/>
<dbReference type="PathwayCommons" id="Q9NWV8"/>
<dbReference type="Reactome" id="R-HSA-5689901">
    <property type="pathway name" value="Metalloprotease DUBs"/>
</dbReference>
<dbReference type="Reactome" id="R-HSA-5693565">
    <property type="pathway name" value="Recruitment and ATM-mediated phosphorylation of repair and signaling proteins at DNA double strand breaks"/>
</dbReference>
<dbReference type="Reactome" id="R-HSA-5693571">
    <property type="pathway name" value="Nonhomologous End-Joining (NHEJ)"/>
</dbReference>
<dbReference type="Reactome" id="R-HSA-5693607">
    <property type="pathway name" value="Processing of DNA double-strand break ends"/>
</dbReference>
<dbReference type="Reactome" id="R-HSA-69473">
    <property type="pathway name" value="G2/M DNA damage checkpoint"/>
</dbReference>
<dbReference type="SignaLink" id="Q9NWV8"/>
<dbReference type="SIGNOR" id="Q9NWV8"/>
<dbReference type="BioGRID-ORCS" id="29086">
    <property type="hits" value="37 hits in 1171 CRISPR screens"/>
</dbReference>
<dbReference type="ChiTaRS" id="BABAM1">
    <property type="organism name" value="human"/>
</dbReference>
<dbReference type="GeneWiki" id="C19orf62"/>
<dbReference type="GenomeRNAi" id="29086"/>
<dbReference type="Pharos" id="Q9NWV8">
    <property type="development level" value="Tbio"/>
</dbReference>
<dbReference type="PRO" id="PR:Q9NWV8"/>
<dbReference type="Proteomes" id="UP000005640">
    <property type="component" value="Chromosome 19"/>
</dbReference>
<dbReference type="RNAct" id="Q9NWV8">
    <property type="molecule type" value="protein"/>
</dbReference>
<dbReference type="Bgee" id="ENSG00000105393">
    <property type="expression patterns" value="Expressed in prefrontal cortex and 197 other cell types or tissues"/>
</dbReference>
<dbReference type="ExpressionAtlas" id="Q9NWV8">
    <property type="expression patterns" value="baseline and differential"/>
</dbReference>
<dbReference type="GO" id="GO:0070531">
    <property type="term" value="C:BRCA1-A complex"/>
    <property type="evidence" value="ECO:0000314"/>
    <property type="project" value="UniProtKB"/>
</dbReference>
<dbReference type="GO" id="GO:0070552">
    <property type="term" value="C:BRISC complex"/>
    <property type="evidence" value="ECO:0000314"/>
    <property type="project" value="UniProtKB"/>
</dbReference>
<dbReference type="GO" id="GO:0005737">
    <property type="term" value="C:cytoplasm"/>
    <property type="evidence" value="ECO:0000314"/>
    <property type="project" value="UniProtKB"/>
</dbReference>
<dbReference type="GO" id="GO:0005829">
    <property type="term" value="C:cytosol"/>
    <property type="evidence" value="ECO:0000314"/>
    <property type="project" value="HPA"/>
</dbReference>
<dbReference type="GO" id="GO:0016604">
    <property type="term" value="C:nuclear body"/>
    <property type="evidence" value="ECO:0000314"/>
    <property type="project" value="HPA"/>
</dbReference>
<dbReference type="GO" id="GO:0005654">
    <property type="term" value="C:nucleoplasm"/>
    <property type="evidence" value="ECO:0000314"/>
    <property type="project" value="HPA"/>
</dbReference>
<dbReference type="GO" id="GO:0005634">
    <property type="term" value="C:nucleus"/>
    <property type="evidence" value="ECO:0000314"/>
    <property type="project" value="UniProtKB"/>
</dbReference>
<dbReference type="GO" id="GO:0042802">
    <property type="term" value="F:identical protein binding"/>
    <property type="evidence" value="ECO:0000353"/>
    <property type="project" value="IntAct"/>
</dbReference>
<dbReference type="GO" id="GO:0051301">
    <property type="term" value="P:cell division"/>
    <property type="evidence" value="ECO:0007669"/>
    <property type="project" value="UniProtKB-KW"/>
</dbReference>
<dbReference type="GO" id="GO:0140861">
    <property type="term" value="P:DNA repair-dependent chromatin remodeling"/>
    <property type="evidence" value="ECO:0000315"/>
    <property type="project" value="UniProtKB"/>
</dbReference>
<dbReference type="GO" id="GO:0006302">
    <property type="term" value="P:double-strand break repair"/>
    <property type="evidence" value="ECO:0000315"/>
    <property type="project" value="UniProtKB"/>
</dbReference>
<dbReference type="GO" id="GO:0071425">
    <property type="term" value="P:hematopoietic stem cell proliferation"/>
    <property type="evidence" value="ECO:0007669"/>
    <property type="project" value="Ensembl"/>
</dbReference>
<dbReference type="GO" id="GO:0007095">
    <property type="term" value="P:mitotic G2 DNA damage checkpoint signaling"/>
    <property type="evidence" value="ECO:0000315"/>
    <property type="project" value="UniProtKB"/>
</dbReference>
<dbReference type="GO" id="GO:0044818">
    <property type="term" value="P:mitotic G2/M transition checkpoint"/>
    <property type="evidence" value="ECO:0000303"/>
    <property type="project" value="ComplexPortal"/>
</dbReference>
<dbReference type="GO" id="GO:0045739">
    <property type="term" value="P:positive regulation of DNA repair"/>
    <property type="evidence" value="ECO:0000315"/>
    <property type="project" value="UniProtKB"/>
</dbReference>
<dbReference type="GO" id="GO:0006282">
    <property type="term" value="P:regulation of DNA repair"/>
    <property type="evidence" value="ECO:0000303"/>
    <property type="project" value="ComplexPortal"/>
</dbReference>
<dbReference type="GO" id="GO:0010212">
    <property type="term" value="P:response to ionizing radiation"/>
    <property type="evidence" value="ECO:0000315"/>
    <property type="project" value="UniProtKB"/>
</dbReference>
<dbReference type="CDD" id="cd21502">
    <property type="entry name" value="vWA_BABAM1"/>
    <property type="match status" value="1"/>
</dbReference>
<dbReference type="Gene3D" id="3.40.50.410">
    <property type="entry name" value="von Willebrand factor, type A domain"/>
    <property type="match status" value="1"/>
</dbReference>
<dbReference type="InterPro" id="IPR026126">
    <property type="entry name" value="BABAM1"/>
</dbReference>
<dbReference type="InterPro" id="IPR036465">
    <property type="entry name" value="vWFA_dom_sf"/>
</dbReference>
<dbReference type="PANTHER" id="PTHR15660">
    <property type="entry name" value="BRISC AND BRCA1-A COMPLEX MEMBER 1"/>
    <property type="match status" value="1"/>
</dbReference>
<dbReference type="PANTHER" id="PTHR15660:SF1">
    <property type="entry name" value="BRISC AND BRCA1-A COMPLEX MEMBER 1"/>
    <property type="match status" value="1"/>
</dbReference>
<dbReference type="SUPFAM" id="SSF53300">
    <property type="entry name" value="vWA-like"/>
    <property type="match status" value="1"/>
</dbReference>